<accession>A2SHL8</accession>
<reference key="1">
    <citation type="journal article" date="2007" name="J. Bacteriol.">
        <title>Whole-genome analysis of the methyl tert-butyl ether-degrading beta-proteobacterium Methylibium petroleiphilum PM1.</title>
        <authorList>
            <person name="Kane S.R."/>
            <person name="Chakicherla A.Y."/>
            <person name="Chain P.S.G."/>
            <person name="Schmidt R."/>
            <person name="Shin M.W."/>
            <person name="Legler T.C."/>
            <person name="Scow K.M."/>
            <person name="Larimer F.W."/>
            <person name="Lucas S.M."/>
            <person name="Richardson P.M."/>
            <person name="Hristova K.R."/>
        </authorList>
    </citation>
    <scope>NUCLEOTIDE SEQUENCE [LARGE SCALE GENOMIC DNA]</scope>
    <source>
        <strain>ATCC BAA-1232 / LMG 22953 / PM1</strain>
    </source>
</reference>
<evidence type="ECO:0000255" key="1">
    <source>
        <dbReference type="HAMAP-Rule" id="MF_01025"/>
    </source>
</evidence>
<comment type="function">
    <text evidence="1">Catalyzes the condensation of the acetyl group of acetyl-CoA with 3-methyl-2-oxobutanoate (2-ketoisovalerate) to form 3-carboxy-3-hydroxy-4-methylpentanoate (2-isopropylmalate).</text>
</comment>
<comment type="catalytic activity">
    <reaction evidence="1">
        <text>3-methyl-2-oxobutanoate + acetyl-CoA + H2O = (2S)-2-isopropylmalate + CoA + H(+)</text>
        <dbReference type="Rhea" id="RHEA:21524"/>
        <dbReference type="ChEBI" id="CHEBI:1178"/>
        <dbReference type="ChEBI" id="CHEBI:11851"/>
        <dbReference type="ChEBI" id="CHEBI:15377"/>
        <dbReference type="ChEBI" id="CHEBI:15378"/>
        <dbReference type="ChEBI" id="CHEBI:57287"/>
        <dbReference type="ChEBI" id="CHEBI:57288"/>
        <dbReference type="EC" id="2.3.3.13"/>
    </reaction>
</comment>
<comment type="cofactor">
    <cofactor evidence="1">
        <name>Mn(2+)</name>
        <dbReference type="ChEBI" id="CHEBI:29035"/>
    </cofactor>
</comment>
<comment type="pathway">
    <text evidence="1">Amino-acid biosynthesis; L-leucine biosynthesis; L-leucine from 3-methyl-2-oxobutanoate: step 1/4.</text>
</comment>
<comment type="subunit">
    <text evidence="1">Homodimer.</text>
</comment>
<comment type="subcellular location">
    <subcellularLocation>
        <location evidence="1">Cytoplasm</location>
    </subcellularLocation>
</comment>
<comment type="similarity">
    <text evidence="1">Belongs to the alpha-IPM synthase/homocitrate synthase family. LeuA type 1 subfamily.</text>
</comment>
<organism>
    <name type="scientific">Methylibium petroleiphilum (strain ATCC BAA-1232 / LMG 22953 / PM1)</name>
    <dbReference type="NCBI Taxonomy" id="420662"/>
    <lineage>
        <taxon>Bacteria</taxon>
        <taxon>Pseudomonadati</taxon>
        <taxon>Pseudomonadota</taxon>
        <taxon>Betaproteobacteria</taxon>
        <taxon>Burkholderiales</taxon>
        <taxon>Sphaerotilaceae</taxon>
        <taxon>Methylibium</taxon>
    </lineage>
</organism>
<proteinExistence type="inferred from homology"/>
<name>LEU1_METPP</name>
<dbReference type="EC" id="2.3.3.13" evidence="1"/>
<dbReference type="EMBL" id="CP000555">
    <property type="protein sequence ID" value="ABM95057.1"/>
    <property type="molecule type" value="Genomic_DNA"/>
</dbReference>
<dbReference type="RefSeq" id="WP_011829694.1">
    <property type="nucleotide sequence ID" value="NC_008825.1"/>
</dbReference>
<dbReference type="SMR" id="A2SHL8"/>
<dbReference type="STRING" id="420662.Mpe_A2101"/>
<dbReference type="KEGG" id="mpt:Mpe_A2101"/>
<dbReference type="eggNOG" id="COG0119">
    <property type="taxonomic scope" value="Bacteria"/>
</dbReference>
<dbReference type="HOGENOM" id="CLU_022158_0_1_4"/>
<dbReference type="UniPathway" id="UPA00048">
    <property type="reaction ID" value="UER00070"/>
</dbReference>
<dbReference type="Proteomes" id="UP000000366">
    <property type="component" value="Chromosome"/>
</dbReference>
<dbReference type="GO" id="GO:0005829">
    <property type="term" value="C:cytosol"/>
    <property type="evidence" value="ECO:0007669"/>
    <property type="project" value="TreeGrafter"/>
</dbReference>
<dbReference type="GO" id="GO:0003852">
    <property type="term" value="F:2-isopropylmalate synthase activity"/>
    <property type="evidence" value="ECO:0007669"/>
    <property type="project" value="UniProtKB-UniRule"/>
</dbReference>
<dbReference type="GO" id="GO:0003985">
    <property type="term" value="F:acetyl-CoA C-acetyltransferase activity"/>
    <property type="evidence" value="ECO:0007669"/>
    <property type="project" value="UniProtKB-UniRule"/>
</dbReference>
<dbReference type="GO" id="GO:0030145">
    <property type="term" value="F:manganese ion binding"/>
    <property type="evidence" value="ECO:0007669"/>
    <property type="project" value="UniProtKB-UniRule"/>
</dbReference>
<dbReference type="GO" id="GO:0009098">
    <property type="term" value="P:L-leucine biosynthetic process"/>
    <property type="evidence" value="ECO:0007669"/>
    <property type="project" value="UniProtKB-UniRule"/>
</dbReference>
<dbReference type="CDD" id="cd07940">
    <property type="entry name" value="DRE_TIM_IPMS"/>
    <property type="match status" value="1"/>
</dbReference>
<dbReference type="FunFam" id="1.10.238.260:FF:000001">
    <property type="entry name" value="2-isopropylmalate synthase"/>
    <property type="match status" value="1"/>
</dbReference>
<dbReference type="FunFam" id="3.20.20.70:FF:000010">
    <property type="entry name" value="2-isopropylmalate synthase"/>
    <property type="match status" value="1"/>
</dbReference>
<dbReference type="Gene3D" id="1.10.238.260">
    <property type="match status" value="1"/>
</dbReference>
<dbReference type="Gene3D" id="3.30.160.270">
    <property type="match status" value="1"/>
</dbReference>
<dbReference type="Gene3D" id="3.20.20.70">
    <property type="entry name" value="Aldolase class I"/>
    <property type="match status" value="1"/>
</dbReference>
<dbReference type="HAMAP" id="MF_01025">
    <property type="entry name" value="LeuA_type1"/>
    <property type="match status" value="1"/>
</dbReference>
<dbReference type="InterPro" id="IPR050073">
    <property type="entry name" value="2-IPM_HCS-like"/>
</dbReference>
<dbReference type="InterPro" id="IPR013709">
    <property type="entry name" value="2-isopropylmalate_synth_dimer"/>
</dbReference>
<dbReference type="InterPro" id="IPR002034">
    <property type="entry name" value="AIPM/Hcit_synth_CS"/>
</dbReference>
<dbReference type="InterPro" id="IPR013785">
    <property type="entry name" value="Aldolase_TIM"/>
</dbReference>
<dbReference type="InterPro" id="IPR054691">
    <property type="entry name" value="LeuA/HCS_post-cat"/>
</dbReference>
<dbReference type="InterPro" id="IPR036230">
    <property type="entry name" value="LeuA_allosteric_dom_sf"/>
</dbReference>
<dbReference type="InterPro" id="IPR005671">
    <property type="entry name" value="LeuA_bact_synth"/>
</dbReference>
<dbReference type="InterPro" id="IPR000891">
    <property type="entry name" value="PYR_CT"/>
</dbReference>
<dbReference type="NCBIfam" id="TIGR00973">
    <property type="entry name" value="leuA_bact"/>
    <property type="match status" value="1"/>
</dbReference>
<dbReference type="NCBIfam" id="NF002086">
    <property type="entry name" value="PRK00915.1-3"/>
    <property type="match status" value="1"/>
</dbReference>
<dbReference type="NCBIfam" id="NF002087">
    <property type="entry name" value="PRK00915.1-4"/>
    <property type="match status" value="1"/>
</dbReference>
<dbReference type="PANTHER" id="PTHR10277:SF9">
    <property type="entry name" value="2-ISOPROPYLMALATE SYNTHASE 1, CHLOROPLASTIC-RELATED"/>
    <property type="match status" value="1"/>
</dbReference>
<dbReference type="PANTHER" id="PTHR10277">
    <property type="entry name" value="HOMOCITRATE SYNTHASE-RELATED"/>
    <property type="match status" value="1"/>
</dbReference>
<dbReference type="Pfam" id="PF22617">
    <property type="entry name" value="HCS_D2"/>
    <property type="match status" value="1"/>
</dbReference>
<dbReference type="Pfam" id="PF00682">
    <property type="entry name" value="HMGL-like"/>
    <property type="match status" value="1"/>
</dbReference>
<dbReference type="Pfam" id="PF08502">
    <property type="entry name" value="LeuA_dimer"/>
    <property type="match status" value="1"/>
</dbReference>
<dbReference type="SMART" id="SM00917">
    <property type="entry name" value="LeuA_dimer"/>
    <property type="match status" value="1"/>
</dbReference>
<dbReference type="SUPFAM" id="SSF110921">
    <property type="entry name" value="2-isopropylmalate synthase LeuA, allosteric (dimerisation) domain"/>
    <property type="match status" value="1"/>
</dbReference>
<dbReference type="SUPFAM" id="SSF51569">
    <property type="entry name" value="Aldolase"/>
    <property type="match status" value="1"/>
</dbReference>
<dbReference type="PROSITE" id="PS00815">
    <property type="entry name" value="AIPM_HOMOCIT_SYNTH_1"/>
    <property type="match status" value="1"/>
</dbReference>
<dbReference type="PROSITE" id="PS00816">
    <property type="entry name" value="AIPM_HOMOCIT_SYNTH_2"/>
    <property type="match status" value="1"/>
</dbReference>
<dbReference type="PROSITE" id="PS50991">
    <property type="entry name" value="PYR_CT"/>
    <property type="match status" value="1"/>
</dbReference>
<gene>
    <name evidence="1" type="primary">leuA</name>
    <name type="ordered locus">Mpe_A2101</name>
</gene>
<feature type="chain" id="PRO_1000149223" description="2-isopropylmalate synthase">
    <location>
        <begin position="1"/>
        <end position="513"/>
    </location>
</feature>
<feature type="domain" description="Pyruvate carboxyltransferase" evidence="1">
    <location>
        <begin position="5"/>
        <end position="268"/>
    </location>
</feature>
<feature type="region of interest" description="Regulatory domain" evidence="1">
    <location>
        <begin position="394"/>
        <end position="513"/>
    </location>
</feature>
<feature type="binding site" evidence="1">
    <location>
        <position position="14"/>
    </location>
    <ligand>
        <name>Mn(2+)</name>
        <dbReference type="ChEBI" id="CHEBI:29035"/>
    </ligand>
</feature>
<feature type="binding site" evidence="1">
    <location>
        <position position="202"/>
    </location>
    <ligand>
        <name>Mn(2+)</name>
        <dbReference type="ChEBI" id="CHEBI:29035"/>
    </ligand>
</feature>
<feature type="binding site" evidence="1">
    <location>
        <position position="204"/>
    </location>
    <ligand>
        <name>Mn(2+)</name>
        <dbReference type="ChEBI" id="CHEBI:29035"/>
    </ligand>
</feature>
<feature type="binding site" evidence="1">
    <location>
        <position position="239"/>
    </location>
    <ligand>
        <name>Mn(2+)</name>
        <dbReference type="ChEBI" id="CHEBI:29035"/>
    </ligand>
</feature>
<sequence length="513" mass="55775">MADKLIIFDTTLRDGEQSPGASMTKDEKLRIARQLERLRVDVIEAGFAASSNGDFEAVRAIADVIKESTVCSLARANDRDIARAAEALKSAARSRIHTFIATSELHMEKKLRMTREQVLEQARLSIRFARNLCEDIEFSPEDGYRSDPDFLCRVIEAVINEGATTINVPDTVGYGIPELYGNFIRTLRERVPNSDKAVWSVHCHNDLGMAVANSLAGVKIGGARQIECTINGLGERAGNCSLEEVVMAVRTRRDHFGLEVGIDTTQIVPASRLVSQTTGFIVQPNKAVVGANAFAHASGIHQDGVLKARDTYEIMRAEDVGWSANKIVLGKLSGRNAFKQRLQELGIELESETDVNAAFARFKDLADRKSDIFDEDIIALVGDESVTHEQETYRLLSLEQQSATGERPHAKVAFAVGETEFHAESEGNGPVDASLKAIESKLKSGAEMLLYSVNAITSGSTESQGEVTVRLQHGGRVVNGVGADPDIVVASAKAYLSALNKLHSKNERVAAQG</sequence>
<protein>
    <recommendedName>
        <fullName evidence="1">2-isopropylmalate synthase</fullName>
        <ecNumber evidence="1">2.3.3.13</ecNumber>
    </recommendedName>
    <alternativeName>
        <fullName evidence="1">Alpha-IPM synthase</fullName>
    </alternativeName>
    <alternativeName>
        <fullName evidence="1">Alpha-isopropylmalate synthase</fullName>
    </alternativeName>
</protein>
<keyword id="KW-0028">Amino-acid biosynthesis</keyword>
<keyword id="KW-0100">Branched-chain amino acid biosynthesis</keyword>
<keyword id="KW-0963">Cytoplasm</keyword>
<keyword id="KW-0432">Leucine biosynthesis</keyword>
<keyword id="KW-0464">Manganese</keyword>
<keyword id="KW-0479">Metal-binding</keyword>
<keyword id="KW-1185">Reference proteome</keyword>
<keyword id="KW-0808">Transferase</keyword>